<sequence length="214" mass="23819">MRCKMKFIVFEGLDGSGKSSLMAALERELQNRAINFLRTREPGGTPLGDEIRNMILRKEGPAPTPRTELLLYEASRSQHVDQVIRPALAAGTWVLCDRFAASSVAFQSGGRAISEADVVMLNTFATGGLKADITVLLDLSVEESRRRRQGRGAVTGETEDRIESEADTFHENVRQSFLKQSREDAAAWIVLDARETPEVLFKQLLQSLTERKVL</sequence>
<comment type="function">
    <text evidence="1">Phosphorylation of dTMP to form dTDP in both de novo and salvage pathways of dTTP synthesis.</text>
</comment>
<comment type="catalytic activity">
    <reaction evidence="1">
        <text>dTMP + ATP = dTDP + ADP</text>
        <dbReference type="Rhea" id="RHEA:13517"/>
        <dbReference type="ChEBI" id="CHEBI:30616"/>
        <dbReference type="ChEBI" id="CHEBI:58369"/>
        <dbReference type="ChEBI" id="CHEBI:63528"/>
        <dbReference type="ChEBI" id="CHEBI:456216"/>
        <dbReference type="EC" id="2.7.4.9"/>
    </reaction>
</comment>
<comment type="similarity">
    <text evidence="1">Belongs to the thymidylate kinase family.</text>
</comment>
<name>KTHY_BDEBA</name>
<reference key="1">
    <citation type="journal article" date="2004" name="Science">
        <title>A predator unmasked: life cycle of Bdellovibrio bacteriovorus from a genomic perspective.</title>
        <authorList>
            <person name="Rendulic S."/>
            <person name="Jagtap P."/>
            <person name="Rosinus A."/>
            <person name="Eppinger M."/>
            <person name="Baar C."/>
            <person name="Lanz C."/>
            <person name="Keller H."/>
            <person name="Lambert C."/>
            <person name="Evans K.J."/>
            <person name="Goesmann A."/>
            <person name="Meyer F."/>
            <person name="Sockett R.E."/>
            <person name="Schuster S.C."/>
        </authorList>
    </citation>
    <scope>NUCLEOTIDE SEQUENCE [LARGE SCALE GENOMIC DNA]</scope>
    <source>
        <strain>ATCC 15356 / DSM 50701 / NCIMB 9529 / HD100</strain>
    </source>
</reference>
<evidence type="ECO:0000255" key="1">
    <source>
        <dbReference type="HAMAP-Rule" id="MF_00165"/>
    </source>
</evidence>
<feature type="chain" id="PRO_0000155241" description="Thymidylate kinase">
    <location>
        <begin position="1"/>
        <end position="214"/>
    </location>
</feature>
<feature type="binding site" evidence="1">
    <location>
        <begin position="12"/>
        <end position="19"/>
    </location>
    <ligand>
        <name>ATP</name>
        <dbReference type="ChEBI" id="CHEBI:30616"/>
    </ligand>
</feature>
<dbReference type="EC" id="2.7.4.9" evidence="1"/>
<dbReference type="EMBL" id="BX842648">
    <property type="protein sequence ID" value="CAE78970.1"/>
    <property type="molecule type" value="Genomic_DNA"/>
</dbReference>
<dbReference type="SMR" id="Q6MP28"/>
<dbReference type="STRING" id="264462.Bd1040"/>
<dbReference type="KEGG" id="bba:Bd1040"/>
<dbReference type="eggNOG" id="COG0125">
    <property type="taxonomic scope" value="Bacteria"/>
</dbReference>
<dbReference type="HOGENOM" id="CLU_049131_0_2_7"/>
<dbReference type="Proteomes" id="UP000008080">
    <property type="component" value="Chromosome"/>
</dbReference>
<dbReference type="GO" id="GO:0005829">
    <property type="term" value="C:cytosol"/>
    <property type="evidence" value="ECO:0007669"/>
    <property type="project" value="TreeGrafter"/>
</dbReference>
<dbReference type="GO" id="GO:0005524">
    <property type="term" value="F:ATP binding"/>
    <property type="evidence" value="ECO:0007669"/>
    <property type="project" value="UniProtKB-UniRule"/>
</dbReference>
<dbReference type="GO" id="GO:0004798">
    <property type="term" value="F:dTMP kinase activity"/>
    <property type="evidence" value="ECO:0007669"/>
    <property type="project" value="UniProtKB-UniRule"/>
</dbReference>
<dbReference type="GO" id="GO:0006233">
    <property type="term" value="P:dTDP biosynthetic process"/>
    <property type="evidence" value="ECO:0007669"/>
    <property type="project" value="InterPro"/>
</dbReference>
<dbReference type="GO" id="GO:0006235">
    <property type="term" value="P:dTTP biosynthetic process"/>
    <property type="evidence" value="ECO:0007669"/>
    <property type="project" value="UniProtKB-UniRule"/>
</dbReference>
<dbReference type="GO" id="GO:0006227">
    <property type="term" value="P:dUDP biosynthetic process"/>
    <property type="evidence" value="ECO:0007669"/>
    <property type="project" value="TreeGrafter"/>
</dbReference>
<dbReference type="CDD" id="cd01672">
    <property type="entry name" value="TMPK"/>
    <property type="match status" value="1"/>
</dbReference>
<dbReference type="FunFam" id="3.40.50.300:FF:000225">
    <property type="entry name" value="Thymidylate kinase"/>
    <property type="match status" value="1"/>
</dbReference>
<dbReference type="Gene3D" id="3.40.50.300">
    <property type="entry name" value="P-loop containing nucleotide triphosphate hydrolases"/>
    <property type="match status" value="1"/>
</dbReference>
<dbReference type="HAMAP" id="MF_00165">
    <property type="entry name" value="Thymidylate_kinase"/>
    <property type="match status" value="1"/>
</dbReference>
<dbReference type="InterPro" id="IPR027417">
    <property type="entry name" value="P-loop_NTPase"/>
</dbReference>
<dbReference type="InterPro" id="IPR039430">
    <property type="entry name" value="Thymidylate_kin-like_dom"/>
</dbReference>
<dbReference type="InterPro" id="IPR018095">
    <property type="entry name" value="Thymidylate_kin_CS"/>
</dbReference>
<dbReference type="InterPro" id="IPR018094">
    <property type="entry name" value="Thymidylate_kinase"/>
</dbReference>
<dbReference type="NCBIfam" id="TIGR00041">
    <property type="entry name" value="DTMP_kinase"/>
    <property type="match status" value="1"/>
</dbReference>
<dbReference type="PANTHER" id="PTHR10344">
    <property type="entry name" value="THYMIDYLATE KINASE"/>
    <property type="match status" value="1"/>
</dbReference>
<dbReference type="PANTHER" id="PTHR10344:SF4">
    <property type="entry name" value="UMP-CMP KINASE 2, MITOCHONDRIAL"/>
    <property type="match status" value="1"/>
</dbReference>
<dbReference type="Pfam" id="PF02223">
    <property type="entry name" value="Thymidylate_kin"/>
    <property type="match status" value="1"/>
</dbReference>
<dbReference type="SUPFAM" id="SSF52540">
    <property type="entry name" value="P-loop containing nucleoside triphosphate hydrolases"/>
    <property type="match status" value="1"/>
</dbReference>
<dbReference type="PROSITE" id="PS01331">
    <property type="entry name" value="THYMIDYLATE_KINASE"/>
    <property type="match status" value="1"/>
</dbReference>
<organism>
    <name type="scientific">Bdellovibrio bacteriovorus (strain ATCC 15356 / DSM 50701 / NCIMB 9529 / HD100)</name>
    <dbReference type="NCBI Taxonomy" id="264462"/>
    <lineage>
        <taxon>Bacteria</taxon>
        <taxon>Pseudomonadati</taxon>
        <taxon>Bdellovibrionota</taxon>
        <taxon>Bdellovibrionia</taxon>
        <taxon>Bdellovibrionales</taxon>
        <taxon>Pseudobdellovibrionaceae</taxon>
        <taxon>Bdellovibrio</taxon>
    </lineage>
</organism>
<proteinExistence type="inferred from homology"/>
<gene>
    <name evidence="1" type="primary">tmk</name>
    <name type="ordered locus">Bd1040</name>
</gene>
<protein>
    <recommendedName>
        <fullName evidence="1">Thymidylate kinase</fullName>
        <ecNumber evidence="1">2.7.4.9</ecNumber>
    </recommendedName>
    <alternativeName>
        <fullName evidence="1">dTMP kinase</fullName>
    </alternativeName>
</protein>
<accession>Q6MP28</accession>
<keyword id="KW-0067">ATP-binding</keyword>
<keyword id="KW-0418">Kinase</keyword>
<keyword id="KW-0545">Nucleotide biosynthesis</keyword>
<keyword id="KW-0547">Nucleotide-binding</keyword>
<keyword id="KW-1185">Reference proteome</keyword>
<keyword id="KW-0808">Transferase</keyword>